<comment type="function">
    <text evidence="1">Binds to the 23S rRNA.</text>
</comment>
<comment type="similarity">
    <text evidence="1">Belongs to the bacterial ribosomal protein bL9 family.</text>
</comment>
<organism>
    <name type="scientific">Staphylococcus aureus (strain Mu50 / ATCC 700699)</name>
    <dbReference type="NCBI Taxonomy" id="158878"/>
    <lineage>
        <taxon>Bacteria</taxon>
        <taxon>Bacillati</taxon>
        <taxon>Bacillota</taxon>
        <taxon>Bacilli</taxon>
        <taxon>Bacillales</taxon>
        <taxon>Staphylococcaceae</taxon>
        <taxon>Staphylococcus</taxon>
    </lineage>
</organism>
<accession>P66317</accession>
<accession>Q99XF6</accession>
<feature type="chain" id="PRO_0000176676" description="Large ribosomal subunit protein bL9">
    <location>
        <begin position="1"/>
        <end position="148"/>
    </location>
</feature>
<gene>
    <name evidence="1" type="primary">rplI</name>
    <name type="ordered locus">SAV0015</name>
</gene>
<proteinExistence type="inferred from homology"/>
<sequence length="148" mass="16454">MKVIFTQDVKGKGKKGEVKEVPVGYANNFLLKKNYAVEATPGNLKQLELQKKRAKQERQQEIEDAKALKETLSNIEVEVSAKTGEGGKLFGSVSTKQIAEALKAQHDIKIDKRKMDLPNGIHSLGYTNVPVKLDKEVEGTIRVHTVEQ</sequence>
<evidence type="ECO:0000255" key="1">
    <source>
        <dbReference type="HAMAP-Rule" id="MF_00503"/>
    </source>
</evidence>
<evidence type="ECO:0000305" key="2"/>
<reference key="1">
    <citation type="journal article" date="2001" name="Lancet">
        <title>Whole genome sequencing of meticillin-resistant Staphylococcus aureus.</title>
        <authorList>
            <person name="Kuroda M."/>
            <person name="Ohta T."/>
            <person name="Uchiyama I."/>
            <person name="Baba T."/>
            <person name="Yuzawa H."/>
            <person name="Kobayashi I."/>
            <person name="Cui L."/>
            <person name="Oguchi A."/>
            <person name="Aoki K."/>
            <person name="Nagai Y."/>
            <person name="Lian J.-Q."/>
            <person name="Ito T."/>
            <person name="Kanamori M."/>
            <person name="Matsumaru H."/>
            <person name="Maruyama A."/>
            <person name="Murakami H."/>
            <person name="Hosoyama A."/>
            <person name="Mizutani-Ui Y."/>
            <person name="Takahashi N.K."/>
            <person name="Sawano T."/>
            <person name="Inoue R."/>
            <person name="Kaito C."/>
            <person name="Sekimizu K."/>
            <person name="Hirakawa H."/>
            <person name="Kuhara S."/>
            <person name="Goto S."/>
            <person name="Yabuzaki J."/>
            <person name="Kanehisa M."/>
            <person name="Yamashita A."/>
            <person name="Oshima K."/>
            <person name="Furuya K."/>
            <person name="Yoshino C."/>
            <person name="Shiba T."/>
            <person name="Hattori M."/>
            <person name="Ogasawara N."/>
            <person name="Hayashi H."/>
            <person name="Hiramatsu K."/>
        </authorList>
    </citation>
    <scope>NUCLEOTIDE SEQUENCE [LARGE SCALE GENOMIC DNA]</scope>
    <source>
        <strain>Mu50 / ATCC 700699</strain>
    </source>
</reference>
<name>RL9_STAAM</name>
<protein>
    <recommendedName>
        <fullName evidence="1">Large ribosomal subunit protein bL9</fullName>
    </recommendedName>
    <alternativeName>
        <fullName evidence="2">50S ribosomal protein L9</fullName>
    </alternativeName>
</protein>
<dbReference type="EMBL" id="BA000017">
    <property type="protein sequence ID" value="BAB56177.1"/>
    <property type="molecule type" value="Genomic_DNA"/>
</dbReference>
<dbReference type="RefSeq" id="WP_000864305.1">
    <property type="nucleotide sequence ID" value="NC_002758.2"/>
</dbReference>
<dbReference type="SMR" id="P66317"/>
<dbReference type="KEGG" id="sav:SAV0015"/>
<dbReference type="HOGENOM" id="CLU_078938_3_2_9"/>
<dbReference type="PhylomeDB" id="P66317"/>
<dbReference type="Proteomes" id="UP000002481">
    <property type="component" value="Chromosome"/>
</dbReference>
<dbReference type="GO" id="GO:1990904">
    <property type="term" value="C:ribonucleoprotein complex"/>
    <property type="evidence" value="ECO:0007669"/>
    <property type="project" value="UniProtKB-KW"/>
</dbReference>
<dbReference type="GO" id="GO:0005840">
    <property type="term" value="C:ribosome"/>
    <property type="evidence" value="ECO:0007669"/>
    <property type="project" value="UniProtKB-KW"/>
</dbReference>
<dbReference type="GO" id="GO:0019843">
    <property type="term" value="F:rRNA binding"/>
    <property type="evidence" value="ECO:0007669"/>
    <property type="project" value="UniProtKB-UniRule"/>
</dbReference>
<dbReference type="GO" id="GO:0003735">
    <property type="term" value="F:structural constituent of ribosome"/>
    <property type="evidence" value="ECO:0007669"/>
    <property type="project" value="InterPro"/>
</dbReference>
<dbReference type="GO" id="GO:0006412">
    <property type="term" value="P:translation"/>
    <property type="evidence" value="ECO:0007669"/>
    <property type="project" value="UniProtKB-UniRule"/>
</dbReference>
<dbReference type="FunFam" id="3.10.430.100:FF:000002">
    <property type="entry name" value="50S ribosomal protein L9"/>
    <property type="match status" value="1"/>
</dbReference>
<dbReference type="FunFam" id="3.40.5.10:FF:000002">
    <property type="entry name" value="50S ribosomal protein L9"/>
    <property type="match status" value="1"/>
</dbReference>
<dbReference type="Gene3D" id="3.10.430.100">
    <property type="entry name" value="Ribosomal protein L9, C-terminal domain"/>
    <property type="match status" value="1"/>
</dbReference>
<dbReference type="Gene3D" id="3.40.5.10">
    <property type="entry name" value="Ribosomal protein L9, N-terminal domain"/>
    <property type="match status" value="1"/>
</dbReference>
<dbReference type="HAMAP" id="MF_00503">
    <property type="entry name" value="Ribosomal_bL9"/>
    <property type="match status" value="1"/>
</dbReference>
<dbReference type="InterPro" id="IPR000244">
    <property type="entry name" value="Ribosomal_bL9"/>
</dbReference>
<dbReference type="InterPro" id="IPR009027">
    <property type="entry name" value="Ribosomal_bL9/RNase_H1_N"/>
</dbReference>
<dbReference type="InterPro" id="IPR020594">
    <property type="entry name" value="Ribosomal_bL9_bac/chp"/>
</dbReference>
<dbReference type="InterPro" id="IPR020069">
    <property type="entry name" value="Ribosomal_bL9_C"/>
</dbReference>
<dbReference type="InterPro" id="IPR036791">
    <property type="entry name" value="Ribosomal_bL9_C_sf"/>
</dbReference>
<dbReference type="InterPro" id="IPR020070">
    <property type="entry name" value="Ribosomal_bL9_N"/>
</dbReference>
<dbReference type="InterPro" id="IPR036935">
    <property type="entry name" value="Ribosomal_bL9_N_sf"/>
</dbReference>
<dbReference type="NCBIfam" id="TIGR00158">
    <property type="entry name" value="L9"/>
    <property type="match status" value="1"/>
</dbReference>
<dbReference type="PANTHER" id="PTHR21368">
    <property type="entry name" value="50S RIBOSOMAL PROTEIN L9"/>
    <property type="match status" value="1"/>
</dbReference>
<dbReference type="Pfam" id="PF03948">
    <property type="entry name" value="Ribosomal_L9_C"/>
    <property type="match status" value="1"/>
</dbReference>
<dbReference type="Pfam" id="PF01281">
    <property type="entry name" value="Ribosomal_L9_N"/>
    <property type="match status" value="1"/>
</dbReference>
<dbReference type="SUPFAM" id="SSF55658">
    <property type="entry name" value="L9 N-domain-like"/>
    <property type="match status" value="1"/>
</dbReference>
<dbReference type="SUPFAM" id="SSF55653">
    <property type="entry name" value="Ribosomal protein L9 C-domain"/>
    <property type="match status" value="1"/>
</dbReference>
<dbReference type="PROSITE" id="PS00651">
    <property type="entry name" value="RIBOSOMAL_L9"/>
    <property type="match status" value="1"/>
</dbReference>
<keyword id="KW-0687">Ribonucleoprotein</keyword>
<keyword id="KW-0689">Ribosomal protein</keyword>
<keyword id="KW-0694">RNA-binding</keyword>
<keyword id="KW-0699">rRNA-binding</keyword>